<proteinExistence type="inferred from homology"/>
<name>MNHF1_STAAM</name>
<dbReference type="EMBL" id="BA000017">
    <property type="protein sequence ID" value="BAB57109.1"/>
    <property type="molecule type" value="Genomic_DNA"/>
</dbReference>
<dbReference type="RefSeq" id="WP_001016306.1">
    <property type="nucleotide sequence ID" value="NC_002758.2"/>
</dbReference>
<dbReference type="SMR" id="P60692"/>
<dbReference type="KEGG" id="sav:SAV0947"/>
<dbReference type="HOGENOM" id="CLU_125825_1_3_9"/>
<dbReference type="PhylomeDB" id="P60692"/>
<dbReference type="Proteomes" id="UP000002481">
    <property type="component" value="Chromosome"/>
</dbReference>
<dbReference type="GO" id="GO:0005886">
    <property type="term" value="C:plasma membrane"/>
    <property type="evidence" value="ECO:0007669"/>
    <property type="project" value="UniProtKB-SubCell"/>
</dbReference>
<dbReference type="GO" id="GO:0015385">
    <property type="term" value="F:sodium:proton antiporter activity"/>
    <property type="evidence" value="ECO:0007669"/>
    <property type="project" value="TreeGrafter"/>
</dbReference>
<dbReference type="InterPro" id="IPR007208">
    <property type="entry name" value="MrpF/PhaF-like"/>
</dbReference>
<dbReference type="NCBIfam" id="NF009248">
    <property type="entry name" value="PRK12600.1"/>
    <property type="match status" value="1"/>
</dbReference>
<dbReference type="PANTHER" id="PTHR34702">
    <property type="entry name" value="NA(+)/H(+) ANTIPORTER SUBUNIT F1"/>
    <property type="match status" value="1"/>
</dbReference>
<dbReference type="PANTHER" id="PTHR34702:SF1">
    <property type="entry name" value="NA(+)_H(+) ANTIPORTER SUBUNIT F"/>
    <property type="match status" value="1"/>
</dbReference>
<dbReference type="Pfam" id="PF04066">
    <property type="entry name" value="MrpF_PhaF"/>
    <property type="match status" value="1"/>
</dbReference>
<dbReference type="PIRSF" id="PIRSF028784">
    <property type="entry name" value="MrpF"/>
    <property type="match status" value="1"/>
</dbReference>
<comment type="function">
    <text evidence="1">Mnh complex is a Na(+)/H(+) antiporter involved in Na(+) excretion.</text>
</comment>
<comment type="subunit">
    <text evidence="1">May form a heterooligomeric complex that consists of seven subunits: mnhA1, mnhB1, mnhC1, mnhD1, mnhE1, mnhF1 and mnhG1.</text>
</comment>
<comment type="subcellular location">
    <subcellularLocation>
        <location evidence="3">Cell membrane</location>
        <topology evidence="3">Multi-pass membrane protein</topology>
    </subcellularLocation>
</comment>
<comment type="similarity">
    <text evidence="3">Belongs to the CPA3 antiporters (TC 2.A.63) subunit F family.</text>
</comment>
<gene>
    <name type="primary">mnhF1</name>
    <name type="ordered locus">SAV0947</name>
</gene>
<feature type="chain" id="PRO_0000087736" description="Na(+)/H(+) antiporter subunit F1">
    <location>
        <begin position="1"/>
        <end position="97"/>
    </location>
</feature>
<feature type="transmembrane region" description="Helical" evidence="2">
    <location>
        <begin position="5"/>
        <end position="27"/>
    </location>
</feature>
<feature type="transmembrane region" description="Helical" evidence="2">
    <location>
        <begin position="34"/>
        <end position="56"/>
    </location>
</feature>
<feature type="transmembrane region" description="Helical" evidence="2">
    <location>
        <begin position="60"/>
        <end position="82"/>
    </location>
</feature>
<sequence length="97" mass="10616">MNHNVIIVIALIIVVISMLAMLIRVVLGPSLADRVVALDAIGLQLMAVIALFSILLNIKYMIVVIMMIGILAFLGTAVFSKFMDKGKVIEHDQNHTD</sequence>
<organism>
    <name type="scientific">Staphylococcus aureus (strain Mu50 / ATCC 700699)</name>
    <dbReference type="NCBI Taxonomy" id="158878"/>
    <lineage>
        <taxon>Bacteria</taxon>
        <taxon>Bacillati</taxon>
        <taxon>Bacillota</taxon>
        <taxon>Bacilli</taxon>
        <taxon>Bacillales</taxon>
        <taxon>Staphylococcaceae</taxon>
        <taxon>Staphylococcus</taxon>
    </lineage>
</organism>
<keyword id="KW-0050">Antiport</keyword>
<keyword id="KW-1003">Cell membrane</keyword>
<keyword id="KW-0375">Hydrogen ion transport</keyword>
<keyword id="KW-0406">Ion transport</keyword>
<keyword id="KW-0472">Membrane</keyword>
<keyword id="KW-0915">Sodium</keyword>
<keyword id="KW-0739">Sodium transport</keyword>
<keyword id="KW-0812">Transmembrane</keyword>
<keyword id="KW-1133">Transmembrane helix</keyword>
<keyword id="KW-0813">Transport</keyword>
<reference key="1">
    <citation type="journal article" date="2001" name="Lancet">
        <title>Whole genome sequencing of meticillin-resistant Staphylococcus aureus.</title>
        <authorList>
            <person name="Kuroda M."/>
            <person name="Ohta T."/>
            <person name="Uchiyama I."/>
            <person name="Baba T."/>
            <person name="Yuzawa H."/>
            <person name="Kobayashi I."/>
            <person name="Cui L."/>
            <person name="Oguchi A."/>
            <person name="Aoki K."/>
            <person name="Nagai Y."/>
            <person name="Lian J.-Q."/>
            <person name="Ito T."/>
            <person name="Kanamori M."/>
            <person name="Matsumaru H."/>
            <person name="Maruyama A."/>
            <person name="Murakami H."/>
            <person name="Hosoyama A."/>
            <person name="Mizutani-Ui Y."/>
            <person name="Takahashi N.K."/>
            <person name="Sawano T."/>
            <person name="Inoue R."/>
            <person name="Kaito C."/>
            <person name="Sekimizu K."/>
            <person name="Hirakawa H."/>
            <person name="Kuhara S."/>
            <person name="Goto S."/>
            <person name="Yabuzaki J."/>
            <person name="Kanehisa M."/>
            <person name="Yamashita A."/>
            <person name="Oshima K."/>
            <person name="Furuya K."/>
            <person name="Yoshino C."/>
            <person name="Shiba T."/>
            <person name="Hattori M."/>
            <person name="Ogasawara N."/>
            <person name="Hayashi H."/>
            <person name="Hiramatsu K."/>
        </authorList>
    </citation>
    <scope>NUCLEOTIDE SEQUENCE [LARGE SCALE GENOMIC DNA]</scope>
    <source>
        <strain>Mu50 / ATCC 700699</strain>
    </source>
</reference>
<protein>
    <recommendedName>
        <fullName>Na(+)/H(+) antiporter subunit F1</fullName>
    </recommendedName>
    <alternativeName>
        <fullName>Mnh complex subunit F1</fullName>
    </alternativeName>
</protein>
<evidence type="ECO:0000250" key="1"/>
<evidence type="ECO:0000255" key="2"/>
<evidence type="ECO:0000305" key="3"/>
<accession>P60692</accession>
<accession>Q9ZNG1</accession>